<feature type="chain" id="PRO_1000052253" description="Large ribosomal subunit protein uL24">
    <location>
        <begin position="1"/>
        <end position="121"/>
    </location>
</feature>
<feature type="region of interest" description="Disordered" evidence="2">
    <location>
        <begin position="1"/>
        <end position="30"/>
    </location>
</feature>
<proteinExistence type="inferred from homology"/>
<accession>A3CT08</accession>
<organism>
    <name type="scientific">Methanoculleus marisnigri (strain ATCC 35101 / DSM 1498 / JR1)</name>
    <dbReference type="NCBI Taxonomy" id="368407"/>
    <lineage>
        <taxon>Archaea</taxon>
        <taxon>Methanobacteriati</taxon>
        <taxon>Methanobacteriota</taxon>
        <taxon>Stenosarchaea group</taxon>
        <taxon>Methanomicrobia</taxon>
        <taxon>Methanomicrobiales</taxon>
        <taxon>Methanomicrobiaceae</taxon>
        <taxon>Methanoculleus</taxon>
    </lineage>
</organism>
<keyword id="KW-0687">Ribonucleoprotein</keyword>
<keyword id="KW-0689">Ribosomal protein</keyword>
<keyword id="KW-0694">RNA-binding</keyword>
<keyword id="KW-0699">rRNA-binding</keyword>
<protein>
    <recommendedName>
        <fullName evidence="1">Large ribosomal subunit protein uL24</fullName>
    </recommendedName>
    <alternativeName>
        <fullName evidence="3">50S ribosomal protein L24</fullName>
    </alternativeName>
</protein>
<sequence>MVRIVSKQPRKQRKARYNAPNHTRGRFLSAALSPELRGKYNSRRTRVVKGDTVKVLRGDFAGDEGVVDAVDMKACRLVVHGVMVTKADGTEVPRPVDPSNVQITKLNLKDKLREERLGGGA</sequence>
<dbReference type="EMBL" id="CP000562">
    <property type="protein sequence ID" value="ABN56508.1"/>
    <property type="molecule type" value="Genomic_DNA"/>
</dbReference>
<dbReference type="RefSeq" id="WP_011843418.1">
    <property type="nucleotide sequence ID" value="NC_009051.1"/>
</dbReference>
<dbReference type="SMR" id="A3CT08"/>
<dbReference type="STRING" id="368407.Memar_0575"/>
<dbReference type="GeneID" id="4846264"/>
<dbReference type="KEGG" id="mem:Memar_0575"/>
<dbReference type="eggNOG" id="arCOG04094">
    <property type="taxonomic scope" value="Archaea"/>
</dbReference>
<dbReference type="HOGENOM" id="CLU_093240_2_1_2"/>
<dbReference type="OrthoDB" id="10899at2157"/>
<dbReference type="Proteomes" id="UP000002146">
    <property type="component" value="Chromosome"/>
</dbReference>
<dbReference type="GO" id="GO:0015934">
    <property type="term" value="C:large ribosomal subunit"/>
    <property type="evidence" value="ECO:0007669"/>
    <property type="project" value="InterPro"/>
</dbReference>
<dbReference type="GO" id="GO:0019843">
    <property type="term" value="F:rRNA binding"/>
    <property type="evidence" value="ECO:0007669"/>
    <property type="project" value="UniProtKB-UniRule"/>
</dbReference>
<dbReference type="GO" id="GO:0003735">
    <property type="term" value="F:structural constituent of ribosome"/>
    <property type="evidence" value="ECO:0007669"/>
    <property type="project" value="InterPro"/>
</dbReference>
<dbReference type="GO" id="GO:0006412">
    <property type="term" value="P:translation"/>
    <property type="evidence" value="ECO:0007669"/>
    <property type="project" value="UniProtKB-UniRule"/>
</dbReference>
<dbReference type="CDD" id="cd06089">
    <property type="entry name" value="KOW_RPL26"/>
    <property type="match status" value="1"/>
</dbReference>
<dbReference type="Gene3D" id="2.30.30.30">
    <property type="match status" value="1"/>
</dbReference>
<dbReference type="HAMAP" id="MF_01326_A">
    <property type="entry name" value="Ribosomal_uL24_A"/>
    <property type="match status" value="1"/>
</dbReference>
<dbReference type="InterPro" id="IPR005824">
    <property type="entry name" value="KOW"/>
</dbReference>
<dbReference type="InterPro" id="IPR014722">
    <property type="entry name" value="Rib_uL2_dom2"/>
</dbReference>
<dbReference type="InterPro" id="IPR005825">
    <property type="entry name" value="Ribosomal_uL24_CS"/>
</dbReference>
<dbReference type="InterPro" id="IPR005756">
    <property type="entry name" value="Ribosomal_uL24_euk/arc"/>
</dbReference>
<dbReference type="InterPro" id="IPR041988">
    <property type="entry name" value="Ribosomal_uL24_KOW"/>
</dbReference>
<dbReference type="InterPro" id="IPR008991">
    <property type="entry name" value="Translation_prot_SH3-like_sf"/>
</dbReference>
<dbReference type="NCBIfam" id="TIGR01080">
    <property type="entry name" value="rplX_A_E"/>
    <property type="match status" value="1"/>
</dbReference>
<dbReference type="PANTHER" id="PTHR11143">
    <property type="entry name" value="60S RIBOSOMAL PROTEIN L26 FAMILY MEMBER"/>
    <property type="match status" value="1"/>
</dbReference>
<dbReference type="Pfam" id="PF00467">
    <property type="entry name" value="KOW"/>
    <property type="match status" value="1"/>
</dbReference>
<dbReference type="Pfam" id="PF16906">
    <property type="entry name" value="Ribosomal_L26"/>
    <property type="match status" value="1"/>
</dbReference>
<dbReference type="SMART" id="SM00739">
    <property type="entry name" value="KOW"/>
    <property type="match status" value="1"/>
</dbReference>
<dbReference type="SUPFAM" id="SSF50104">
    <property type="entry name" value="Translation proteins SH3-like domain"/>
    <property type="match status" value="1"/>
</dbReference>
<dbReference type="PROSITE" id="PS01108">
    <property type="entry name" value="RIBOSOMAL_L24"/>
    <property type="match status" value="1"/>
</dbReference>
<reference key="1">
    <citation type="journal article" date="2009" name="Stand. Genomic Sci.">
        <title>Complete genome sequence of Methanoculleus marisnigri Romesser et al. 1981 type strain JR1.</title>
        <authorList>
            <person name="Anderson I.J."/>
            <person name="Sieprawska-Lupa M."/>
            <person name="Lapidus A."/>
            <person name="Nolan M."/>
            <person name="Copeland A."/>
            <person name="Glavina Del Rio T."/>
            <person name="Tice H."/>
            <person name="Dalin E."/>
            <person name="Barry K."/>
            <person name="Saunders E."/>
            <person name="Han C."/>
            <person name="Brettin T."/>
            <person name="Detter J.C."/>
            <person name="Bruce D."/>
            <person name="Mikhailova N."/>
            <person name="Pitluck S."/>
            <person name="Hauser L."/>
            <person name="Land M."/>
            <person name="Lucas S."/>
            <person name="Richardson P."/>
            <person name="Whitman W.B."/>
            <person name="Kyrpides N.C."/>
        </authorList>
    </citation>
    <scope>NUCLEOTIDE SEQUENCE [LARGE SCALE GENOMIC DNA]</scope>
    <source>
        <strain>ATCC 35101 / DSM 1498 / JR1</strain>
    </source>
</reference>
<evidence type="ECO:0000255" key="1">
    <source>
        <dbReference type="HAMAP-Rule" id="MF_01326"/>
    </source>
</evidence>
<evidence type="ECO:0000256" key="2">
    <source>
        <dbReference type="SAM" id="MobiDB-lite"/>
    </source>
</evidence>
<evidence type="ECO:0000305" key="3"/>
<comment type="function">
    <text evidence="1">One of two assembly initiator proteins, it binds directly to the 5'-end of the 23S rRNA, where it nucleates assembly of the 50S subunit.</text>
</comment>
<comment type="function">
    <text evidence="1">Located at the polypeptide exit tunnel on the outside of the subunit.</text>
</comment>
<comment type="subunit">
    <text evidence="1">Part of the 50S ribosomal subunit.</text>
</comment>
<comment type="similarity">
    <text evidence="1">Belongs to the universal ribosomal protein uL24 family.</text>
</comment>
<name>RL24_METMJ</name>
<gene>
    <name evidence="1" type="primary">rpl24</name>
    <name type="ordered locus">Memar_0575</name>
</gene>